<feature type="chain" id="PRO_0000187607" description="Uroporphyrinogen decarboxylase">
    <location>
        <begin position="1"/>
        <end position="340"/>
    </location>
</feature>
<feature type="binding site" evidence="1">
    <location>
        <begin position="21"/>
        <end position="25"/>
    </location>
    <ligand>
        <name>substrate</name>
    </ligand>
</feature>
<feature type="binding site" evidence="1">
    <location>
        <position position="40"/>
    </location>
    <ligand>
        <name>substrate</name>
    </ligand>
</feature>
<feature type="binding site" evidence="1">
    <location>
        <position position="71"/>
    </location>
    <ligand>
        <name>substrate</name>
    </ligand>
</feature>
<feature type="binding site" evidence="1">
    <location>
        <position position="147"/>
    </location>
    <ligand>
        <name>substrate</name>
    </ligand>
</feature>
<feature type="binding site" evidence="1">
    <location>
        <position position="202"/>
    </location>
    <ligand>
        <name>substrate</name>
    </ligand>
</feature>
<feature type="binding site" evidence="1">
    <location>
        <position position="316"/>
    </location>
    <ligand>
        <name>substrate</name>
    </ligand>
</feature>
<feature type="site" description="Transition state stabilizer" evidence="1">
    <location>
        <position position="71"/>
    </location>
</feature>
<sequence length="340" mass="38466">MIFIDACFRKPTPYTPIWLMRQAGRYLSEYKQTRTKAGSFLSLCKNVELATEVTLQPVEILDVDAAILFSDILVVPLEMGLPLEFLAGEGPKFNRTISNVSDVVNLQEGAHKRLTYVYDTLSSIRSKLPKEKALIGFCGSPWTLATYMIEGQGSKTYAKSKAMLYKEPYILKTLLETLSEELKLYLEGQIRAGANAVQIFDSWASALECEVYFEFSWKYMKDIAQYIKGKYPHIPVMLFPKGIAGYLDKIDGCFDVFGVDWGTPMALAKSYLGTKYVLQGNLEPSRLYDKESMERGIDEILKIMGKEKGHIFNLGHGMLPDLPRENAIALVQMVREKSKR</sequence>
<protein>
    <recommendedName>
        <fullName evidence="1">Uroporphyrinogen decarboxylase</fullName>
        <shortName evidence="1">UPD</shortName>
        <shortName evidence="1">URO-D</shortName>
        <ecNumber evidence="1">4.1.1.37</ecNumber>
    </recommendedName>
</protein>
<keyword id="KW-0963">Cytoplasm</keyword>
<keyword id="KW-0210">Decarboxylase</keyword>
<keyword id="KW-0456">Lyase</keyword>
<keyword id="KW-0627">Porphyrin biosynthesis</keyword>
<keyword id="KW-1185">Reference proteome</keyword>
<comment type="function">
    <text evidence="1">Catalyzes the decarboxylation of four acetate groups of uroporphyrinogen-III to yield coproporphyrinogen-III.</text>
</comment>
<comment type="catalytic activity">
    <reaction evidence="1">
        <text>uroporphyrinogen III + 4 H(+) = coproporphyrinogen III + 4 CO2</text>
        <dbReference type="Rhea" id="RHEA:19865"/>
        <dbReference type="ChEBI" id="CHEBI:15378"/>
        <dbReference type="ChEBI" id="CHEBI:16526"/>
        <dbReference type="ChEBI" id="CHEBI:57308"/>
        <dbReference type="ChEBI" id="CHEBI:57309"/>
        <dbReference type="EC" id="4.1.1.37"/>
    </reaction>
</comment>
<comment type="pathway">
    <text evidence="1">Porphyrin-containing compound metabolism; protoporphyrin-IX biosynthesis; coproporphyrinogen-III from 5-aminolevulinate: step 4/4.</text>
</comment>
<comment type="subunit">
    <text evidence="1">Homodimer.</text>
</comment>
<comment type="subcellular location">
    <subcellularLocation>
        <location evidence="1">Cytoplasm</location>
    </subcellularLocation>
</comment>
<comment type="similarity">
    <text evidence="1">Belongs to the uroporphyrinogen decarboxylase family.</text>
</comment>
<accession>Q7VF06</accession>
<dbReference type="EC" id="4.1.1.37" evidence="1"/>
<dbReference type="EMBL" id="AE017125">
    <property type="protein sequence ID" value="AAP78470.1"/>
    <property type="molecule type" value="Genomic_DNA"/>
</dbReference>
<dbReference type="RefSeq" id="WP_011116712.1">
    <property type="nucleotide sequence ID" value="NC_004917.1"/>
</dbReference>
<dbReference type="SMR" id="Q7VF06"/>
<dbReference type="STRING" id="235279.HH_1873"/>
<dbReference type="KEGG" id="hhe:HH_1873"/>
<dbReference type="eggNOG" id="COG0407">
    <property type="taxonomic scope" value="Bacteria"/>
</dbReference>
<dbReference type="HOGENOM" id="CLU_040933_0_0_7"/>
<dbReference type="OrthoDB" id="9806656at2"/>
<dbReference type="UniPathway" id="UPA00251">
    <property type="reaction ID" value="UER00321"/>
</dbReference>
<dbReference type="Proteomes" id="UP000002495">
    <property type="component" value="Chromosome"/>
</dbReference>
<dbReference type="GO" id="GO:0005829">
    <property type="term" value="C:cytosol"/>
    <property type="evidence" value="ECO:0007669"/>
    <property type="project" value="TreeGrafter"/>
</dbReference>
<dbReference type="GO" id="GO:0004853">
    <property type="term" value="F:uroporphyrinogen decarboxylase activity"/>
    <property type="evidence" value="ECO:0007669"/>
    <property type="project" value="UniProtKB-UniRule"/>
</dbReference>
<dbReference type="GO" id="GO:0019353">
    <property type="term" value="P:protoporphyrinogen IX biosynthetic process from glutamate"/>
    <property type="evidence" value="ECO:0007669"/>
    <property type="project" value="TreeGrafter"/>
</dbReference>
<dbReference type="CDD" id="cd00717">
    <property type="entry name" value="URO-D"/>
    <property type="match status" value="1"/>
</dbReference>
<dbReference type="FunFam" id="3.20.20.210:FF:000007">
    <property type="entry name" value="Uroporphyrinogen decarboxylase"/>
    <property type="match status" value="1"/>
</dbReference>
<dbReference type="Gene3D" id="3.20.20.210">
    <property type="match status" value="1"/>
</dbReference>
<dbReference type="HAMAP" id="MF_00218">
    <property type="entry name" value="URO_D"/>
    <property type="match status" value="1"/>
</dbReference>
<dbReference type="InterPro" id="IPR038071">
    <property type="entry name" value="UROD/MetE-like_sf"/>
</dbReference>
<dbReference type="InterPro" id="IPR006361">
    <property type="entry name" value="Uroporphyrinogen_deCO2ase_HemE"/>
</dbReference>
<dbReference type="InterPro" id="IPR000257">
    <property type="entry name" value="Uroporphyrinogen_deCOase"/>
</dbReference>
<dbReference type="NCBIfam" id="TIGR01464">
    <property type="entry name" value="hemE"/>
    <property type="match status" value="1"/>
</dbReference>
<dbReference type="PANTHER" id="PTHR21091">
    <property type="entry name" value="METHYLTETRAHYDROFOLATE:HOMOCYSTEINE METHYLTRANSFERASE RELATED"/>
    <property type="match status" value="1"/>
</dbReference>
<dbReference type="PANTHER" id="PTHR21091:SF169">
    <property type="entry name" value="UROPORPHYRINOGEN DECARBOXYLASE"/>
    <property type="match status" value="1"/>
</dbReference>
<dbReference type="Pfam" id="PF01208">
    <property type="entry name" value="URO-D"/>
    <property type="match status" value="1"/>
</dbReference>
<dbReference type="SUPFAM" id="SSF51726">
    <property type="entry name" value="UROD/MetE-like"/>
    <property type="match status" value="1"/>
</dbReference>
<dbReference type="PROSITE" id="PS00906">
    <property type="entry name" value="UROD_1"/>
    <property type="match status" value="1"/>
</dbReference>
<dbReference type="PROSITE" id="PS00907">
    <property type="entry name" value="UROD_2"/>
    <property type="match status" value="1"/>
</dbReference>
<proteinExistence type="inferred from homology"/>
<name>DCUP_HELHP</name>
<reference key="1">
    <citation type="journal article" date="2003" name="Proc. Natl. Acad. Sci. U.S.A.">
        <title>The complete genome sequence of the carcinogenic bacterium Helicobacter hepaticus.</title>
        <authorList>
            <person name="Suerbaum S."/>
            <person name="Josenhans C."/>
            <person name="Sterzenbach T."/>
            <person name="Drescher B."/>
            <person name="Brandt P."/>
            <person name="Bell M."/>
            <person name="Droege M."/>
            <person name="Fartmann B."/>
            <person name="Fischer H.-P."/>
            <person name="Ge Z."/>
            <person name="Hoerster A."/>
            <person name="Holland R."/>
            <person name="Klein K."/>
            <person name="Koenig J."/>
            <person name="Macko L."/>
            <person name="Mendz G.L."/>
            <person name="Nyakatura G."/>
            <person name="Schauer D.B."/>
            <person name="Shen Z."/>
            <person name="Weber J."/>
            <person name="Frosch M."/>
            <person name="Fox J.G."/>
        </authorList>
    </citation>
    <scope>NUCLEOTIDE SEQUENCE [LARGE SCALE GENOMIC DNA]</scope>
    <source>
        <strain>ATCC 51449 / 3B1</strain>
    </source>
</reference>
<gene>
    <name evidence="1" type="primary">hemE</name>
    <name type="ordered locus">HH_1873</name>
</gene>
<organism>
    <name type="scientific">Helicobacter hepaticus (strain ATCC 51449 / 3B1)</name>
    <dbReference type="NCBI Taxonomy" id="235279"/>
    <lineage>
        <taxon>Bacteria</taxon>
        <taxon>Pseudomonadati</taxon>
        <taxon>Campylobacterota</taxon>
        <taxon>Epsilonproteobacteria</taxon>
        <taxon>Campylobacterales</taxon>
        <taxon>Helicobacteraceae</taxon>
        <taxon>Helicobacter</taxon>
    </lineage>
</organism>
<evidence type="ECO:0000255" key="1">
    <source>
        <dbReference type="HAMAP-Rule" id="MF_00218"/>
    </source>
</evidence>